<feature type="chain" id="PRO_0000307803" description="Smith-Magenis syndrome chromosomal region candidate gene 5 protein">
    <location>
        <begin position="1"/>
        <end position="140"/>
    </location>
</feature>
<feature type="region of interest" description="Disordered" evidence="1">
    <location>
        <begin position="43"/>
        <end position="77"/>
    </location>
</feature>
<feature type="compositionally biased region" description="Pro residues" evidence="1">
    <location>
        <begin position="49"/>
        <end position="58"/>
    </location>
</feature>
<name>SMCR5_HUMAN</name>
<organism>
    <name type="scientific">Homo sapiens</name>
    <name type="common">Human</name>
    <dbReference type="NCBI Taxonomy" id="9606"/>
    <lineage>
        <taxon>Eukaryota</taxon>
        <taxon>Metazoa</taxon>
        <taxon>Chordata</taxon>
        <taxon>Craniata</taxon>
        <taxon>Vertebrata</taxon>
        <taxon>Euteleostomi</taxon>
        <taxon>Mammalia</taxon>
        <taxon>Eutheria</taxon>
        <taxon>Euarchontoglires</taxon>
        <taxon>Primates</taxon>
        <taxon>Haplorrhini</taxon>
        <taxon>Catarrhini</taxon>
        <taxon>Hominidae</taxon>
        <taxon>Homo</taxon>
    </lineage>
</organism>
<proteinExistence type="evidence at transcript level"/>
<sequence>MRRCLRVKTRRGQLGLASSCFEQHSCFSPRVNRILSAVQNTLCTGPSSQAPPQPPQASPPAAADHSRTPSLLASSHSASGGESLFQLYIASLAWPQNCCVLESCRRIPLGGLSSMENRRPLLRKGRLLRGQIHHSQTNEL</sequence>
<keyword id="KW-1185">Reference proteome</keyword>
<dbReference type="EMBL" id="AF467442">
    <property type="protein sequence ID" value="AAL78339.1"/>
    <property type="molecule type" value="mRNA"/>
</dbReference>
<dbReference type="BioMuta" id="HGNC:17918"/>
<dbReference type="AGR" id="HGNC:17918"/>
<dbReference type="GeneCards" id="SMCR5"/>
<dbReference type="HGNC" id="HGNC:17918">
    <property type="gene designation" value="SMCR5"/>
</dbReference>
<dbReference type="neXtProt" id="NX_Q8TEV8"/>
<dbReference type="InParanoid" id="Q8TEV8"/>
<dbReference type="PAN-GO" id="Q8TEV8">
    <property type="GO annotations" value="0 GO annotations based on evolutionary models"/>
</dbReference>
<dbReference type="PhylomeDB" id="Q8TEV8"/>
<dbReference type="PathwayCommons" id="Q8TEV8"/>
<dbReference type="Pharos" id="Q8TEV8">
    <property type="development level" value="Tdark"/>
</dbReference>
<dbReference type="PRO" id="PR:Q8TEV8"/>
<dbReference type="Proteomes" id="UP000005640">
    <property type="component" value="Unplaced"/>
</dbReference>
<dbReference type="RNAct" id="Q8TEV8">
    <property type="molecule type" value="protein"/>
</dbReference>
<protein>
    <recommendedName>
        <fullName>Smith-Magenis syndrome chromosomal region candidate gene 5 protein</fullName>
    </recommendedName>
</protein>
<evidence type="ECO:0000256" key="1">
    <source>
        <dbReference type="SAM" id="MobiDB-lite"/>
    </source>
</evidence>
<evidence type="ECO:0000269" key="2">
    <source>
    </source>
</evidence>
<comment type="tissue specificity">
    <text evidence="2">Widely expressed.</text>
</comment>
<gene>
    <name type="primary">SMCR5</name>
</gene>
<accession>Q8TEV8</accession>
<reference key="1">
    <citation type="journal article" date="2002" name="Genome Res.">
        <title>Genes in a refined Smith-Magenis syndrome critical deletion interval on chromosome 17p11.2 and the syntenic region of the mouse.</title>
        <authorList>
            <person name="Bi W."/>
            <person name="Yan J."/>
            <person name="Stankiewicz P."/>
            <person name="Park S.-S."/>
            <person name="Walz K."/>
            <person name="Boerkoel C.F."/>
            <person name="Potocki L."/>
            <person name="Shaffer L.G."/>
            <person name="Devriendt K."/>
            <person name="Nowaczyk M.J.M."/>
            <person name="Inoue K."/>
            <person name="Lupski J.R."/>
        </authorList>
    </citation>
    <scope>NUCLEOTIDE SEQUENCE [MRNA]</scope>
    <scope>TISSUE SPECIFICITY</scope>
</reference>